<dbReference type="EMBL" id="AE006468">
    <property type="protein sequence ID" value="AAL19424.1"/>
    <property type="molecule type" value="Genomic_DNA"/>
</dbReference>
<dbReference type="RefSeq" id="NP_459465.1">
    <property type="nucleotide sequence ID" value="NC_003197.2"/>
</dbReference>
<dbReference type="SMR" id="P66296"/>
<dbReference type="STRING" id="99287.STM0470"/>
<dbReference type="PaxDb" id="99287-STM0470"/>
<dbReference type="GeneID" id="1251990"/>
<dbReference type="KEGG" id="stm:STM0470"/>
<dbReference type="PATRIC" id="fig|99287.12.peg.502"/>
<dbReference type="HOGENOM" id="CLU_135723_3_1_6"/>
<dbReference type="PhylomeDB" id="P66296"/>
<dbReference type="BioCyc" id="SENT99287:STM0470-MONOMER"/>
<dbReference type="Proteomes" id="UP000001014">
    <property type="component" value="Chromosome"/>
</dbReference>
<dbReference type="GO" id="GO:1990904">
    <property type="term" value="C:ribonucleoprotein complex"/>
    <property type="evidence" value="ECO:0007669"/>
    <property type="project" value="UniProtKB-KW"/>
</dbReference>
<dbReference type="GO" id="GO:0005840">
    <property type="term" value="C:ribosome"/>
    <property type="evidence" value="ECO:0007669"/>
    <property type="project" value="UniProtKB-KW"/>
</dbReference>
<dbReference type="GO" id="GO:0003735">
    <property type="term" value="F:structural constituent of ribosome"/>
    <property type="evidence" value="ECO:0007669"/>
    <property type="project" value="InterPro"/>
</dbReference>
<dbReference type="GO" id="GO:0006412">
    <property type="term" value="P:translation"/>
    <property type="evidence" value="ECO:0007669"/>
    <property type="project" value="UniProtKB-UniRule"/>
</dbReference>
<dbReference type="HAMAP" id="MF_00251">
    <property type="entry name" value="Ribosomal_bL36"/>
    <property type="match status" value="1"/>
</dbReference>
<dbReference type="InterPro" id="IPR000473">
    <property type="entry name" value="Ribosomal_bL36"/>
</dbReference>
<dbReference type="InterPro" id="IPR035977">
    <property type="entry name" value="Ribosomal_bL36_sp"/>
</dbReference>
<dbReference type="InterPro" id="IPR047621">
    <property type="entry name" value="Ribosomal_L36_bact"/>
</dbReference>
<dbReference type="NCBIfam" id="NF002021">
    <property type="entry name" value="PRK00831.1"/>
    <property type="match status" value="1"/>
</dbReference>
<dbReference type="NCBIfam" id="TIGR01022">
    <property type="entry name" value="rpmJ_bact"/>
    <property type="match status" value="1"/>
</dbReference>
<dbReference type="PANTHER" id="PTHR47781">
    <property type="entry name" value="50S RIBOSOMAL PROTEIN L36 2"/>
    <property type="match status" value="1"/>
</dbReference>
<dbReference type="PANTHER" id="PTHR47781:SF1">
    <property type="entry name" value="LARGE RIBOSOMAL SUBUNIT PROTEIN BL36B"/>
    <property type="match status" value="1"/>
</dbReference>
<dbReference type="Pfam" id="PF00444">
    <property type="entry name" value="Ribosomal_L36"/>
    <property type="match status" value="1"/>
</dbReference>
<dbReference type="SUPFAM" id="SSF57840">
    <property type="entry name" value="Ribosomal protein L36"/>
    <property type="match status" value="1"/>
</dbReference>
<dbReference type="PROSITE" id="PS00828">
    <property type="entry name" value="RIBOSOMAL_L36"/>
    <property type="match status" value="1"/>
</dbReference>
<accession>P66296</accession>
<accession>Q8XF38</accession>
<protein>
    <recommendedName>
        <fullName evidence="1">Large ribosomal subunit protein bL36B</fullName>
    </recommendedName>
    <alternativeName>
        <fullName evidence="2">50S ribosomal protein L36 2</fullName>
    </alternativeName>
</protein>
<feature type="chain" id="PRO_0000126254" description="Large ribosomal subunit protein bL36B">
    <location>
        <begin position="1"/>
        <end position="46"/>
    </location>
</feature>
<gene>
    <name evidence="1" type="primary">rpmJ2</name>
    <name type="synonym">rpmJ</name>
    <name type="ordered locus">STM0470</name>
</gene>
<comment type="similarity">
    <text evidence="1">Belongs to the bacterial ribosomal protein bL36 family.</text>
</comment>
<evidence type="ECO:0000255" key="1">
    <source>
        <dbReference type="HAMAP-Rule" id="MF_00251"/>
    </source>
</evidence>
<evidence type="ECO:0000305" key="2"/>
<name>RL362_SALTY</name>
<organism>
    <name type="scientific">Salmonella typhimurium (strain LT2 / SGSC1412 / ATCC 700720)</name>
    <dbReference type="NCBI Taxonomy" id="99287"/>
    <lineage>
        <taxon>Bacteria</taxon>
        <taxon>Pseudomonadati</taxon>
        <taxon>Pseudomonadota</taxon>
        <taxon>Gammaproteobacteria</taxon>
        <taxon>Enterobacterales</taxon>
        <taxon>Enterobacteriaceae</taxon>
        <taxon>Salmonella</taxon>
    </lineage>
</organism>
<sequence>MQVLNSLRNAKQRHPDCQIVKRKGRLYVICKTNPRFKAVQGRKKRR</sequence>
<keyword id="KW-1185">Reference proteome</keyword>
<keyword id="KW-0687">Ribonucleoprotein</keyword>
<keyword id="KW-0689">Ribosomal protein</keyword>
<reference key="1">
    <citation type="journal article" date="2001" name="Nature">
        <title>Complete genome sequence of Salmonella enterica serovar Typhimurium LT2.</title>
        <authorList>
            <person name="McClelland M."/>
            <person name="Sanderson K.E."/>
            <person name="Spieth J."/>
            <person name="Clifton S.W."/>
            <person name="Latreille P."/>
            <person name="Courtney L."/>
            <person name="Porwollik S."/>
            <person name="Ali J."/>
            <person name="Dante M."/>
            <person name="Du F."/>
            <person name="Hou S."/>
            <person name="Layman D."/>
            <person name="Leonard S."/>
            <person name="Nguyen C."/>
            <person name="Scott K."/>
            <person name="Holmes A."/>
            <person name="Grewal N."/>
            <person name="Mulvaney E."/>
            <person name="Ryan E."/>
            <person name="Sun H."/>
            <person name="Florea L."/>
            <person name="Miller W."/>
            <person name="Stoneking T."/>
            <person name="Nhan M."/>
            <person name="Waterston R."/>
            <person name="Wilson R.K."/>
        </authorList>
    </citation>
    <scope>NUCLEOTIDE SEQUENCE [LARGE SCALE GENOMIC DNA]</scope>
    <source>
        <strain>LT2 / SGSC1412 / ATCC 700720</strain>
    </source>
</reference>
<proteinExistence type="inferred from homology"/>